<accession>Q2FG27</accession>
<organism>
    <name type="scientific">Staphylococcus aureus (strain USA300)</name>
    <dbReference type="NCBI Taxonomy" id="367830"/>
    <lineage>
        <taxon>Bacteria</taxon>
        <taxon>Bacillati</taxon>
        <taxon>Bacillota</taxon>
        <taxon>Bacilli</taxon>
        <taxon>Bacillales</taxon>
        <taxon>Staphylococcaceae</taxon>
        <taxon>Staphylococcus</taxon>
    </lineage>
</organism>
<sequence length="400" mass="44043">MSKLILAINAGSSSLKFQLIRMPEEELVTKGLVERIGLKDSIFTIEVNGEKVKTVQDIKDHVEAVDIMLDAFKAHNIINDINDIDGTGHRVVHGGEKFPESVAITDEVEKEIEELSELAPLHNPANLMGIRAFRKLLPNIPHVAIFDTAFHQTMPEKAYLYSLPYHYYKDYGIRKYGFHGTSHKFVSQRAAEMLDKPIEDLRIISCHIGNGASIAAIDGGKSIDTSMGFTPLAGVTMGTRSGNIDPALIPFIMEKTGKTAEQVLEILNKESGLLGLSGTSSDLRDLSEEAESGKARSQMALDVFASKIHKYIGSYAARMHGVDVIVFTAGIGENSVEIRAKVLEGLEFMGVYWDPKKNENLLRGKEGFINYPHSPVKVVVIPTDEESMIARDVMTFGGLK</sequence>
<reference key="1">
    <citation type="journal article" date="2006" name="Lancet">
        <title>Complete genome sequence of USA300, an epidemic clone of community-acquired meticillin-resistant Staphylococcus aureus.</title>
        <authorList>
            <person name="Diep B.A."/>
            <person name="Gill S.R."/>
            <person name="Chang R.F."/>
            <person name="Phan T.H."/>
            <person name="Chen J.H."/>
            <person name="Davidson M.G."/>
            <person name="Lin F."/>
            <person name="Lin J."/>
            <person name="Carleton H.A."/>
            <person name="Mongodin E.F."/>
            <person name="Sensabaugh G.F."/>
            <person name="Perdreau-Remington F."/>
        </authorList>
    </citation>
    <scope>NUCLEOTIDE SEQUENCE [LARGE SCALE GENOMIC DNA]</scope>
    <source>
        <strain>USA300</strain>
    </source>
</reference>
<evidence type="ECO:0000255" key="1">
    <source>
        <dbReference type="HAMAP-Rule" id="MF_00020"/>
    </source>
</evidence>
<name>ACKA_STAA3</name>
<gene>
    <name evidence="1" type="primary">ackA</name>
    <name type="ordered locus">SAUSA300_1657</name>
</gene>
<keyword id="KW-0067">ATP-binding</keyword>
<keyword id="KW-0963">Cytoplasm</keyword>
<keyword id="KW-0418">Kinase</keyword>
<keyword id="KW-0460">Magnesium</keyword>
<keyword id="KW-0479">Metal-binding</keyword>
<keyword id="KW-0547">Nucleotide-binding</keyword>
<keyword id="KW-0808">Transferase</keyword>
<feature type="chain" id="PRO_1000002263" description="Acetate kinase">
    <location>
        <begin position="1"/>
        <end position="400"/>
    </location>
</feature>
<feature type="active site" description="Proton donor/acceptor" evidence="1">
    <location>
        <position position="147"/>
    </location>
</feature>
<feature type="binding site" evidence="1">
    <location>
        <position position="9"/>
    </location>
    <ligand>
        <name>Mg(2+)</name>
        <dbReference type="ChEBI" id="CHEBI:18420"/>
    </ligand>
</feature>
<feature type="binding site" evidence="1">
    <location>
        <position position="16"/>
    </location>
    <ligand>
        <name>ATP</name>
        <dbReference type="ChEBI" id="CHEBI:30616"/>
    </ligand>
</feature>
<feature type="binding site" evidence="1">
    <location>
        <position position="90"/>
    </location>
    <ligand>
        <name>substrate</name>
    </ligand>
</feature>
<feature type="binding site" evidence="1">
    <location>
        <begin position="207"/>
        <end position="211"/>
    </location>
    <ligand>
        <name>ATP</name>
        <dbReference type="ChEBI" id="CHEBI:30616"/>
    </ligand>
</feature>
<feature type="binding site" evidence="1">
    <location>
        <begin position="282"/>
        <end position="284"/>
    </location>
    <ligand>
        <name>ATP</name>
        <dbReference type="ChEBI" id="CHEBI:30616"/>
    </ligand>
</feature>
<feature type="binding site" evidence="1">
    <location>
        <begin position="330"/>
        <end position="334"/>
    </location>
    <ligand>
        <name>ATP</name>
        <dbReference type="ChEBI" id="CHEBI:30616"/>
    </ligand>
</feature>
<feature type="binding site" evidence="1">
    <location>
        <position position="385"/>
    </location>
    <ligand>
        <name>Mg(2+)</name>
        <dbReference type="ChEBI" id="CHEBI:18420"/>
    </ligand>
</feature>
<feature type="site" description="Transition state stabilizer" evidence="1">
    <location>
        <position position="179"/>
    </location>
</feature>
<feature type="site" description="Transition state stabilizer" evidence="1">
    <location>
        <position position="240"/>
    </location>
</feature>
<proteinExistence type="inferred from homology"/>
<dbReference type="EC" id="2.7.2.1" evidence="1"/>
<dbReference type="EMBL" id="CP000255">
    <property type="protein sequence ID" value="ABD20455.1"/>
    <property type="molecule type" value="Genomic_DNA"/>
</dbReference>
<dbReference type="RefSeq" id="WP_000040069.1">
    <property type="nucleotide sequence ID" value="NZ_CP027476.1"/>
</dbReference>
<dbReference type="SMR" id="Q2FG27"/>
<dbReference type="KEGG" id="saa:SAUSA300_1657"/>
<dbReference type="HOGENOM" id="CLU_020352_0_1_9"/>
<dbReference type="OMA" id="HKYVSQR"/>
<dbReference type="UniPathway" id="UPA00340">
    <property type="reaction ID" value="UER00458"/>
</dbReference>
<dbReference type="Proteomes" id="UP000001939">
    <property type="component" value="Chromosome"/>
</dbReference>
<dbReference type="GO" id="GO:0005737">
    <property type="term" value="C:cytoplasm"/>
    <property type="evidence" value="ECO:0007669"/>
    <property type="project" value="UniProtKB-SubCell"/>
</dbReference>
<dbReference type="GO" id="GO:0008776">
    <property type="term" value="F:acetate kinase activity"/>
    <property type="evidence" value="ECO:0007669"/>
    <property type="project" value="UniProtKB-UniRule"/>
</dbReference>
<dbReference type="GO" id="GO:0005524">
    <property type="term" value="F:ATP binding"/>
    <property type="evidence" value="ECO:0007669"/>
    <property type="project" value="UniProtKB-KW"/>
</dbReference>
<dbReference type="GO" id="GO:0000287">
    <property type="term" value="F:magnesium ion binding"/>
    <property type="evidence" value="ECO:0007669"/>
    <property type="project" value="UniProtKB-UniRule"/>
</dbReference>
<dbReference type="GO" id="GO:0006083">
    <property type="term" value="P:acetate metabolic process"/>
    <property type="evidence" value="ECO:0007669"/>
    <property type="project" value="TreeGrafter"/>
</dbReference>
<dbReference type="GO" id="GO:0006085">
    <property type="term" value="P:acetyl-CoA biosynthetic process"/>
    <property type="evidence" value="ECO:0007669"/>
    <property type="project" value="UniProtKB-UniRule"/>
</dbReference>
<dbReference type="CDD" id="cd24010">
    <property type="entry name" value="ASKHA_NBD_AcK_PK"/>
    <property type="match status" value="1"/>
</dbReference>
<dbReference type="Gene3D" id="3.30.420.40">
    <property type="match status" value="2"/>
</dbReference>
<dbReference type="HAMAP" id="MF_00020">
    <property type="entry name" value="Acetate_kinase"/>
    <property type="match status" value="1"/>
</dbReference>
<dbReference type="InterPro" id="IPR004372">
    <property type="entry name" value="Ac/propionate_kinase"/>
</dbReference>
<dbReference type="InterPro" id="IPR000890">
    <property type="entry name" value="Aliphatic_acid_kin_short-chain"/>
</dbReference>
<dbReference type="InterPro" id="IPR023865">
    <property type="entry name" value="Aliphatic_acid_kinase_CS"/>
</dbReference>
<dbReference type="InterPro" id="IPR043129">
    <property type="entry name" value="ATPase_NBD"/>
</dbReference>
<dbReference type="NCBIfam" id="TIGR00016">
    <property type="entry name" value="ackA"/>
    <property type="match status" value="1"/>
</dbReference>
<dbReference type="PANTHER" id="PTHR21060">
    <property type="entry name" value="ACETATE KINASE"/>
    <property type="match status" value="1"/>
</dbReference>
<dbReference type="PANTHER" id="PTHR21060:SF15">
    <property type="entry name" value="ACETATE KINASE-RELATED"/>
    <property type="match status" value="1"/>
</dbReference>
<dbReference type="Pfam" id="PF00871">
    <property type="entry name" value="Acetate_kinase"/>
    <property type="match status" value="1"/>
</dbReference>
<dbReference type="PIRSF" id="PIRSF000722">
    <property type="entry name" value="Acetate_prop_kin"/>
    <property type="match status" value="1"/>
</dbReference>
<dbReference type="PRINTS" id="PR00471">
    <property type="entry name" value="ACETATEKNASE"/>
</dbReference>
<dbReference type="SUPFAM" id="SSF53067">
    <property type="entry name" value="Actin-like ATPase domain"/>
    <property type="match status" value="2"/>
</dbReference>
<dbReference type="PROSITE" id="PS01075">
    <property type="entry name" value="ACETATE_KINASE_1"/>
    <property type="match status" value="1"/>
</dbReference>
<dbReference type="PROSITE" id="PS01076">
    <property type="entry name" value="ACETATE_KINASE_2"/>
    <property type="match status" value="1"/>
</dbReference>
<protein>
    <recommendedName>
        <fullName evidence="1">Acetate kinase</fullName>
        <ecNumber evidence="1">2.7.2.1</ecNumber>
    </recommendedName>
    <alternativeName>
        <fullName evidence="1">Acetokinase</fullName>
    </alternativeName>
</protein>
<comment type="function">
    <text evidence="1">Catalyzes the formation of acetyl phosphate from acetate and ATP. Can also catalyze the reverse reaction.</text>
</comment>
<comment type="catalytic activity">
    <reaction evidence="1">
        <text>acetate + ATP = acetyl phosphate + ADP</text>
        <dbReference type="Rhea" id="RHEA:11352"/>
        <dbReference type="ChEBI" id="CHEBI:22191"/>
        <dbReference type="ChEBI" id="CHEBI:30089"/>
        <dbReference type="ChEBI" id="CHEBI:30616"/>
        <dbReference type="ChEBI" id="CHEBI:456216"/>
        <dbReference type="EC" id="2.7.2.1"/>
    </reaction>
</comment>
<comment type="cofactor">
    <cofactor evidence="1">
        <name>Mg(2+)</name>
        <dbReference type="ChEBI" id="CHEBI:18420"/>
    </cofactor>
    <cofactor evidence="1">
        <name>Mn(2+)</name>
        <dbReference type="ChEBI" id="CHEBI:29035"/>
    </cofactor>
    <text evidence="1">Mg(2+). Can also accept Mn(2+).</text>
</comment>
<comment type="pathway">
    <text evidence="1">Metabolic intermediate biosynthesis; acetyl-CoA biosynthesis; acetyl-CoA from acetate: step 1/2.</text>
</comment>
<comment type="subunit">
    <text evidence="1">Homodimer.</text>
</comment>
<comment type="subcellular location">
    <subcellularLocation>
        <location evidence="1">Cytoplasm</location>
    </subcellularLocation>
</comment>
<comment type="similarity">
    <text evidence="1">Belongs to the acetokinase family.</text>
</comment>